<dbReference type="EMBL" id="AC021198">
    <property type="protein sequence ID" value="AAF79885.1"/>
    <property type="status" value="ALT_SEQ"/>
    <property type="molecule type" value="Genomic_DNA"/>
</dbReference>
<dbReference type="EMBL" id="CP002684">
    <property type="protein sequence ID" value="AEE31827.1"/>
    <property type="molecule type" value="Genomic_DNA"/>
</dbReference>
<dbReference type="PIR" id="F86479">
    <property type="entry name" value="F86479"/>
</dbReference>
<dbReference type="RefSeq" id="NP_174813.1">
    <property type="nucleotide sequence ID" value="NM_103277.1"/>
</dbReference>
<dbReference type="SMR" id="Q9LP21"/>
<dbReference type="STRING" id="3702.Q9LP21"/>
<dbReference type="iPTMnet" id="Q9LP21"/>
<dbReference type="PaxDb" id="3702-AT1G35750.1"/>
<dbReference type="EnsemblPlants" id="AT1G35750.1">
    <property type="protein sequence ID" value="AT1G35750.1"/>
    <property type="gene ID" value="AT1G35750"/>
</dbReference>
<dbReference type="GeneID" id="840480"/>
<dbReference type="Gramene" id="AT1G35750.1">
    <property type="protein sequence ID" value="AT1G35750.1"/>
    <property type="gene ID" value="AT1G35750"/>
</dbReference>
<dbReference type="KEGG" id="ath:AT1G35750"/>
<dbReference type="Araport" id="AT1G35750"/>
<dbReference type="TAIR" id="AT1G35750">
    <property type="gene designation" value="PUM10"/>
</dbReference>
<dbReference type="eggNOG" id="KOG2049">
    <property type="taxonomic scope" value="Eukaryota"/>
</dbReference>
<dbReference type="HOGENOM" id="CLU_004017_5_2_1"/>
<dbReference type="InParanoid" id="Q9LP21"/>
<dbReference type="OMA" id="HMNRPIK"/>
<dbReference type="PhylomeDB" id="Q9LP21"/>
<dbReference type="PRO" id="PR:Q9LP21"/>
<dbReference type="Proteomes" id="UP000006548">
    <property type="component" value="Chromosome 1"/>
</dbReference>
<dbReference type="ExpressionAtlas" id="Q9LP21">
    <property type="expression patterns" value="baseline and differential"/>
</dbReference>
<dbReference type="GO" id="GO:0005737">
    <property type="term" value="C:cytoplasm"/>
    <property type="evidence" value="ECO:0000314"/>
    <property type="project" value="TAIR"/>
</dbReference>
<dbReference type="GO" id="GO:0003723">
    <property type="term" value="F:RNA binding"/>
    <property type="evidence" value="ECO:0007669"/>
    <property type="project" value="UniProtKB-KW"/>
</dbReference>
<dbReference type="GO" id="GO:0006417">
    <property type="term" value="P:regulation of translation"/>
    <property type="evidence" value="ECO:0007669"/>
    <property type="project" value="UniProtKB-KW"/>
</dbReference>
<dbReference type="CDD" id="cd07920">
    <property type="entry name" value="Pumilio"/>
    <property type="match status" value="1"/>
</dbReference>
<dbReference type="FunFam" id="1.25.10.10:FF:000237">
    <property type="entry name" value="Pumilio homolog 9"/>
    <property type="match status" value="1"/>
</dbReference>
<dbReference type="Gene3D" id="1.25.10.10">
    <property type="entry name" value="Leucine-rich Repeat Variant"/>
    <property type="match status" value="1"/>
</dbReference>
<dbReference type="InterPro" id="IPR011989">
    <property type="entry name" value="ARM-like"/>
</dbReference>
<dbReference type="InterPro" id="IPR016024">
    <property type="entry name" value="ARM-type_fold"/>
</dbReference>
<dbReference type="InterPro" id="IPR033133">
    <property type="entry name" value="PUM-HD"/>
</dbReference>
<dbReference type="InterPro" id="IPR033712">
    <property type="entry name" value="Pumilio_RNA-bd"/>
</dbReference>
<dbReference type="InterPro" id="IPR001313">
    <property type="entry name" value="Pumilio_RNA-bd_rpt"/>
</dbReference>
<dbReference type="PANTHER" id="PTHR12537:SF136">
    <property type="entry name" value="PUMILIO HOMOLOG 9-RELATED"/>
    <property type="match status" value="1"/>
</dbReference>
<dbReference type="PANTHER" id="PTHR12537">
    <property type="entry name" value="RNA BINDING PROTEIN PUMILIO-RELATED"/>
    <property type="match status" value="1"/>
</dbReference>
<dbReference type="Pfam" id="PF00806">
    <property type="entry name" value="PUF"/>
    <property type="match status" value="8"/>
</dbReference>
<dbReference type="SMART" id="SM00025">
    <property type="entry name" value="Pumilio"/>
    <property type="match status" value="8"/>
</dbReference>
<dbReference type="SUPFAM" id="SSF48371">
    <property type="entry name" value="ARM repeat"/>
    <property type="match status" value="1"/>
</dbReference>
<dbReference type="PROSITE" id="PS50302">
    <property type="entry name" value="PUM"/>
    <property type="match status" value="7"/>
</dbReference>
<dbReference type="PROSITE" id="PS50303">
    <property type="entry name" value="PUM_HD"/>
    <property type="match status" value="1"/>
</dbReference>
<keyword id="KW-0963">Cytoplasm</keyword>
<keyword id="KW-1185">Reference proteome</keyword>
<keyword id="KW-0677">Repeat</keyword>
<keyword id="KW-0694">RNA-binding</keyword>
<keyword id="KW-0810">Translation regulation</keyword>
<reference key="1">
    <citation type="journal article" date="2000" name="Nature">
        <title>Sequence and analysis of chromosome 1 of the plant Arabidopsis thaliana.</title>
        <authorList>
            <person name="Theologis A."/>
            <person name="Ecker J.R."/>
            <person name="Palm C.J."/>
            <person name="Federspiel N.A."/>
            <person name="Kaul S."/>
            <person name="White O."/>
            <person name="Alonso J."/>
            <person name="Altafi H."/>
            <person name="Araujo R."/>
            <person name="Bowman C.L."/>
            <person name="Brooks S.Y."/>
            <person name="Buehler E."/>
            <person name="Chan A."/>
            <person name="Chao Q."/>
            <person name="Chen H."/>
            <person name="Cheuk R.F."/>
            <person name="Chin C.W."/>
            <person name="Chung M.K."/>
            <person name="Conn L."/>
            <person name="Conway A.B."/>
            <person name="Conway A.R."/>
            <person name="Creasy T.H."/>
            <person name="Dewar K."/>
            <person name="Dunn P."/>
            <person name="Etgu P."/>
            <person name="Feldblyum T.V."/>
            <person name="Feng J.-D."/>
            <person name="Fong B."/>
            <person name="Fujii C.Y."/>
            <person name="Gill J.E."/>
            <person name="Goldsmith A.D."/>
            <person name="Haas B."/>
            <person name="Hansen N.F."/>
            <person name="Hughes B."/>
            <person name="Huizar L."/>
            <person name="Hunter J.L."/>
            <person name="Jenkins J."/>
            <person name="Johnson-Hopson C."/>
            <person name="Khan S."/>
            <person name="Khaykin E."/>
            <person name="Kim C.J."/>
            <person name="Koo H.L."/>
            <person name="Kremenetskaia I."/>
            <person name="Kurtz D.B."/>
            <person name="Kwan A."/>
            <person name="Lam B."/>
            <person name="Langin-Hooper S."/>
            <person name="Lee A."/>
            <person name="Lee J.M."/>
            <person name="Lenz C.A."/>
            <person name="Li J.H."/>
            <person name="Li Y.-P."/>
            <person name="Lin X."/>
            <person name="Liu S.X."/>
            <person name="Liu Z.A."/>
            <person name="Luros J.S."/>
            <person name="Maiti R."/>
            <person name="Marziali A."/>
            <person name="Militscher J."/>
            <person name="Miranda M."/>
            <person name="Nguyen M."/>
            <person name="Nierman W.C."/>
            <person name="Osborne B.I."/>
            <person name="Pai G."/>
            <person name="Peterson J."/>
            <person name="Pham P.K."/>
            <person name="Rizzo M."/>
            <person name="Rooney T."/>
            <person name="Rowley D."/>
            <person name="Sakano H."/>
            <person name="Salzberg S.L."/>
            <person name="Schwartz J.R."/>
            <person name="Shinn P."/>
            <person name="Southwick A.M."/>
            <person name="Sun H."/>
            <person name="Tallon L.J."/>
            <person name="Tambunga G."/>
            <person name="Toriumi M.J."/>
            <person name="Town C.D."/>
            <person name="Utterback T."/>
            <person name="Van Aken S."/>
            <person name="Vaysberg M."/>
            <person name="Vysotskaia V.S."/>
            <person name="Walker M."/>
            <person name="Wu D."/>
            <person name="Yu G."/>
            <person name="Fraser C.M."/>
            <person name="Venter J.C."/>
            <person name="Davis R.W."/>
        </authorList>
    </citation>
    <scope>NUCLEOTIDE SEQUENCE [LARGE SCALE GENOMIC DNA]</scope>
    <source>
        <strain>cv. Columbia</strain>
    </source>
</reference>
<reference key="2">
    <citation type="journal article" date="2017" name="Plant J.">
        <title>Araport11: a complete reannotation of the Arabidopsis thaliana reference genome.</title>
        <authorList>
            <person name="Cheng C.Y."/>
            <person name="Krishnakumar V."/>
            <person name="Chan A.P."/>
            <person name="Thibaud-Nissen F."/>
            <person name="Schobel S."/>
            <person name="Town C.D."/>
        </authorList>
    </citation>
    <scope>GENOME REANNOTATION</scope>
    <source>
        <strain>cv. Columbia</strain>
    </source>
</reference>
<reference key="3">
    <citation type="journal article" date="2009" name="FEBS J.">
        <title>Molecular characterization of Arabidopsis thaliana PUF proteins -- binding specificity and target candidates.</title>
        <authorList>
            <person name="Francischini C.W."/>
            <person name="Quaggio R.B."/>
        </authorList>
    </citation>
    <scope>GENE FAMILY</scope>
</reference>
<reference key="4">
    <citation type="journal article" date="2010" name="BMC Plant Biol.">
        <title>The Puf family of RNA-binding proteins in plants: phylogeny, structural modeling, activity and subcellular localization.</title>
        <authorList>
            <person name="Tam P.P."/>
            <person name="Barrette-Ng I.H."/>
            <person name="Simon D.M."/>
            <person name="Tam M.W."/>
            <person name="Ang A.L."/>
            <person name="Muench D.G."/>
        </authorList>
    </citation>
    <scope>GENE FAMILY</scope>
    <scope>SUBCELLULAR LOCATION</scope>
</reference>
<organism>
    <name type="scientific">Arabidopsis thaliana</name>
    <name type="common">Mouse-ear cress</name>
    <dbReference type="NCBI Taxonomy" id="3702"/>
    <lineage>
        <taxon>Eukaryota</taxon>
        <taxon>Viridiplantae</taxon>
        <taxon>Streptophyta</taxon>
        <taxon>Embryophyta</taxon>
        <taxon>Tracheophyta</taxon>
        <taxon>Spermatophyta</taxon>
        <taxon>Magnoliopsida</taxon>
        <taxon>eudicotyledons</taxon>
        <taxon>Gunneridae</taxon>
        <taxon>Pentapetalae</taxon>
        <taxon>rosids</taxon>
        <taxon>malvids</taxon>
        <taxon>Brassicales</taxon>
        <taxon>Brassicaceae</taxon>
        <taxon>Camelineae</taxon>
        <taxon>Arabidopsis</taxon>
    </lineage>
</organism>
<name>PUM10_ARATH</name>
<accession>Q9LP21</accession>
<proteinExistence type="inferred from homology"/>
<comment type="function">
    <text evidence="1">Sequence-specific RNA-binding protein that regulates translation and mRNA stability by binding the 3'-UTR of target mRNAs.</text>
</comment>
<comment type="subcellular location">
    <subcellularLocation>
        <location evidence="3">Cytoplasm</location>
    </subcellularLocation>
</comment>
<comment type="domain">
    <text evidence="1">The pumilio repeats mediate the association with RNA by packing together to form a right-handed superhelix that approximates a half donut. The number as well as the specific sequence of the repeats determine the specificity for target mRNAs (By similarity).</text>
</comment>
<comment type="sequence caution" evidence="4">
    <conflict type="erroneous gene model prediction">
        <sequence resource="EMBL-CDS" id="AAF79885"/>
    </conflict>
</comment>
<evidence type="ECO:0000250" key="1"/>
<evidence type="ECO:0000255" key="2">
    <source>
        <dbReference type="PROSITE-ProRule" id="PRU00318"/>
    </source>
</evidence>
<evidence type="ECO:0000269" key="3">
    <source>
    </source>
</evidence>
<evidence type="ECO:0000305" key="4"/>
<feature type="chain" id="PRO_0000401392" description="Putative pumilio homolog 10">
    <location>
        <begin position="1"/>
        <end position="528"/>
    </location>
</feature>
<feature type="domain" description="PUM-HD" evidence="2">
    <location>
        <begin position="188"/>
        <end position="528"/>
    </location>
</feature>
<feature type="repeat" description="Pumilio 1">
    <location>
        <begin position="213"/>
        <end position="248"/>
    </location>
</feature>
<feature type="repeat" description="Pumilio 2">
    <location>
        <begin position="249"/>
        <end position="284"/>
    </location>
</feature>
<feature type="repeat" description="Pumilio 3">
    <location>
        <begin position="285"/>
        <end position="323"/>
    </location>
</feature>
<feature type="repeat" description="Pumilio 4">
    <location>
        <begin position="325"/>
        <end position="360"/>
    </location>
</feature>
<feature type="repeat" description="Pumilio 5">
    <location>
        <begin position="361"/>
        <end position="396"/>
    </location>
</feature>
<feature type="repeat" description="Pumilio 6">
    <location>
        <begin position="397"/>
        <end position="433"/>
    </location>
</feature>
<feature type="repeat" description="Pumilio 7">
    <location>
        <begin position="434"/>
        <end position="465"/>
    </location>
</feature>
<feature type="repeat" description="Pumilio 8">
    <location>
        <begin position="466"/>
        <end position="503"/>
    </location>
</feature>
<gene>
    <name type="primary">APUM10</name>
    <name type="ordered locus">At1g35750</name>
    <name type="ORF">F14D7.5</name>
</gene>
<protein>
    <recommendedName>
        <fullName>Putative pumilio homolog 10</fullName>
        <shortName>APUM-10</shortName>
        <shortName>AtPUM10</shortName>
    </recommendedName>
</protein>
<sequence length="528" mass="59381">MEIFNFGQASDHRRLPDFGSGGFLQSLDTNPFLKNQYYNNSVEALELCKKLNKMGISCDMSIWTKPEEPFRVDPGDFGAKTLHESFGFDQNLTGASQIHDGFRNFSSVRVQNNNFHGVSPSPGLLGLQDSFNPNGFEEMMAFKDHKDFLLDHINEPIKRSPFLRGNDAFKGSLMFEGIRVSQILAAMEGSGASYPDEPKINGGLPLDLVSMVEIYGSVNLMARDQIGCRALQKLVEEGTVLDSKVIFLEIIDHVVELSMDPLGNYIVQKLLVVSDEEQRTMIVSVLTSKPRELIKICLNTNGTRVIQKMIKTVKTKQQIALVKSALEPGFLVLVNDSNGYHVLQSCLEFLVPNDNKFVVEAATEYCAQLATHQYGCYVLQCSLINTVGLQHERLVAEISRDSLRLSQDPFGNYVVQCLIDQQVSSVNLLLPFRTHCIELATQKFSSHVIEKCLRKYPESRAEIVRELLSYPNFEQLLQDPYANYVIQTALSVTKGAVRARLVEKVKRFGKLQSNPYCKKIFSKTILKK</sequence>